<comment type="sequence caution" evidence="1">
    <conflict type="erroneous initiation">
        <sequence resource="EMBL-CDS" id="CCP43533"/>
    </conflict>
    <text>Truncated N-terminus.</text>
</comment>
<protein>
    <recommendedName>
        <fullName evidence="2">Protein Rv0786c</fullName>
    </recommendedName>
</protein>
<proteinExistence type="evidence at protein level"/>
<name>Y786_MYCTU</name>
<reference evidence="3" key="1">
    <citation type="journal article" date="1998" name="Nature">
        <title>Deciphering the biology of Mycobacterium tuberculosis from the complete genome sequence.</title>
        <authorList>
            <person name="Cole S.T."/>
            <person name="Brosch R."/>
            <person name="Parkhill J."/>
            <person name="Garnier T."/>
            <person name="Churcher C.M."/>
            <person name="Harris D.E."/>
            <person name="Gordon S.V."/>
            <person name="Eiglmeier K."/>
            <person name="Gas S."/>
            <person name="Barry C.E. III"/>
            <person name="Tekaia F."/>
            <person name="Badcock K."/>
            <person name="Basham D."/>
            <person name="Brown D."/>
            <person name="Chillingworth T."/>
            <person name="Connor R."/>
            <person name="Davies R.M."/>
            <person name="Devlin K."/>
            <person name="Feltwell T."/>
            <person name="Gentles S."/>
            <person name="Hamlin N."/>
            <person name="Holroyd S."/>
            <person name="Hornsby T."/>
            <person name="Jagels K."/>
            <person name="Krogh A."/>
            <person name="McLean J."/>
            <person name="Moule S."/>
            <person name="Murphy L.D."/>
            <person name="Oliver S."/>
            <person name="Osborne J."/>
            <person name="Quail M.A."/>
            <person name="Rajandream M.A."/>
            <person name="Rogers J."/>
            <person name="Rutter S."/>
            <person name="Seeger K."/>
            <person name="Skelton S."/>
            <person name="Squares S."/>
            <person name="Squares R."/>
            <person name="Sulston J.E."/>
            <person name="Taylor K."/>
            <person name="Whitehead S."/>
            <person name="Barrell B.G."/>
        </authorList>
    </citation>
    <scope>NUCLEOTIDE SEQUENCE [LARGE SCALE GENOMIC DNA]</scope>
    <source>
        <strain>ATCC 25618 / H37Rv</strain>
    </source>
</reference>
<reference evidence="4" key="2">
    <citation type="journal article" date="2011" name="Mol. Cell. Proteomics">
        <title>Proteogenomic analysis of Mycobacterium tuberculosis by high resolution mass spectrometry.</title>
        <authorList>
            <person name="Kelkar D.S."/>
            <person name="Kumar D."/>
            <person name="Kumar P."/>
            <person name="Balakrishnan L."/>
            <person name="Muthusamy B."/>
            <person name="Yadav A.K."/>
            <person name="Shrivastava P."/>
            <person name="Marimuthu A."/>
            <person name="Anand S."/>
            <person name="Sundaram H."/>
            <person name="Kingsbury R."/>
            <person name="Harsha H.C."/>
            <person name="Nair B."/>
            <person name="Prasad T.S."/>
            <person name="Chauhan D.S."/>
            <person name="Katoch K."/>
            <person name="Katoch V.M."/>
            <person name="Kumar P."/>
            <person name="Chaerkady R."/>
            <person name="Ramachandran S."/>
            <person name="Dash D."/>
            <person name="Pandey A."/>
        </authorList>
    </citation>
    <scope>IDENTIFICATION BY MASS SPECTROMETRY [LARGE SCALE ANALYSIS]</scope>
    <source>
        <strain>ATCC 25618 / H37Rv</strain>
    </source>
</reference>
<reference key="3">
    <citation type="journal article" date="2022" name="Genomics">
        <title>Deep N-terminomics of Mycobacterium tuberculosis H37Rv extensively correct annotated encoding genes.</title>
        <authorList>
            <person name="Shi J."/>
            <person name="Meng S."/>
            <person name="Wan L."/>
            <person name="Zhang Z."/>
            <person name="Jiang S."/>
            <person name="Zhu H."/>
            <person name="Dai E."/>
            <person name="Chang L."/>
            <person name="Gao H."/>
            <person name="Wan K."/>
            <person name="Zhang L."/>
            <person name="Zhao X."/>
            <person name="Liu H."/>
            <person name="Lyu Z."/>
            <person name="Zhang Y."/>
            <person name="Xu P."/>
        </authorList>
    </citation>
    <scope>PROTEIN SEQUENCE OF 20-54 AND 83-98</scope>
    <scope>SEQUENCE REVISION TO N-TERMINUS</scope>
    <source>
        <strain>H37Rv</strain>
    </source>
</reference>
<evidence type="ECO:0000269" key="1">
    <source>
    </source>
</evidence>
<evidence type="ECO:0000305" key="2"/>
<evidence type="ECO:0000312" key="3">
    <source>
        <dbReference type="EMBL" id="CCP43533.1"/>
    </source>
</evidence>
<evidence type="ECO:0007744" key="4">
    <source>
    </source>
</evidence>
<gene>
    <name evidence="3" type="ordered locus">Rv0786c</name>
</gene>
<keyword id="KW-0903">Direct protein sequencing</keyword>
<keyword id="KW-1185">Reference proteome</keyword>
<feature type="chain" id="PRO_0000455999" description="Protein Rv0786c">
    <location>
        <begin position="1"/>
        <end position="212"/>
    </location>
</feature>
<sequence length="212" mass="23034">MQLTHFGHSCLLAEFGQTRLLFDPGTFSHGFEGITGLSAILITHQHPDHIDVTRLPTLLEDNPAAELYADPQTAAQLGEPWRAVHVGDELPLAELTVRAVGGCHAVIHPEIPVIENISYLVGDSKHRARLMHPGDALFVPGEQVDVLATPAAAPWMKISEAVDYLRAVAPARAVPIHQAIVAPDARGIYYGRLTEMTTTDFQVLPEESAVTF</sequence>
<accession>P71839</accession>
<accession>F2GNQ1</accession>
<dbReference type="EMBL" id="AL123456">
    <property type="protein sequence ID" value="CCP43533.1"/>
    <property type="status" value="ALT_INIT"/>
    <property type="molecule type" value="Genomic_DNA"/>
</dbReference>
<dbReference type="RefSeq" id="NP_215300.2">
    <property type="nucleotide sequence ID" value="NC_000962.3"/>
</dbReference>
<dbReference type="RefSeq" id="WP_003403989.1">
    <property type="nucleotide sequence ID" value="NZ_NVQJ01000035.1"/>
</dbReference>
<dbReference type="SMR" id="P71839"/>
<dbReference type="STRING" id="83332.Rv0786c"/>
<dbReference type="PaxDb" id="83332-Rv0786c"/>
<dbReference type="GeneID" id="885615"/>
<dbReference type="KEGG" id="mtu:Rv0786c"/>
<dbReference type="KEGG" id="mtv:RVBD_0786c"/>
<dbReference type="TubercuList" id="Rv0786c"/>
<dbReference type="eggNOG" id="COG2220">
    <property type="taxonomic scope" value="Bacteria"/>
</dbReference>
<dbReference type="InParanoid" id="P71839"/>
<dbReference type="OrthoDB" id="3190691at2"/>
<dbReference type="PhylomeDB" id="P71839"/>
<dbReference type="Proteomes" id="UP000001584">
    <property type="component" value="Chromosome"/>
</dbReference>
<dbReference type="Gene3D" id="3.60.15.10">
    <property type="entry name" value="Ribonuclease Z/Hydroxyacylglutathione hydrolase-like"/>
    <property type="match status" value="1"/>
</dbReference>
<dbReference type="InterPro" id="IPR001279">
    <property type="entry name" value="Metallo-B-lactamas"/>
</dbReference>
<dbReference type="InterPro" id="IPR036866">
    <property type="entry name" value="RibonucZ/Hydroxyglut_hydro"/>
</dbReference>
<dbReference type="InterPro" id="IPR050114">
    <property type="entry name" value="UPF0173_UPF0282_UlaG_hydrolase"/>
</dbReference>
<dbReference type="PANTHER" id="PTHR43546:SF3">
    <property type="entry name" value="UPF0173 METAL-DEPENDENT HYDROLASE MJ1163"/>
    <property type="match status" value="1"/>
</dbReference>
<dbReference type="PANTHER" id="PTHR43546">
    <property type="entry name" value="UPF0173 METAL-DEPENDENT HYDROLASE MJ1163-RELATED"/>
    <property type="match status" value="1"/>
</dbReference>
<dbReference type="Pfam" id="PF13483">
    <property type="entry name" value="Lactamase_B_3"/>
    <property type="match status" value="1"/>
</dbReference>
<dbReference type="SMART" id="SM00849">
    <property type="entry name" value="Lactamase_B"/>
    <property type="match status" value="1"/>
</dbReference>
<dbReference type="SUPFAM" id="SSF56281">
    <property type="entry name" value="Metallo-hydrolase/oxidoreductase"/>
    <property type="match status" value="1"/>
</dbReference>
<organism>
    <name type="scientific">Mycobacterium tuberculosis (strain ATCC 25618 / H37Rv)</name>
    <dbReference type="NCBI Taxonomy" id="83332"/>
    <lineage>
        <taxon>Bacteria</taxon>
        <taxon>Bacillati</taxon>
        <taxon>Actinomycetota</taxon>
        <taxon>Actinomycetes</taxon>
        <taxon>Mycobacteriales</taxon>
        <taxon>Mycobacteriaceae</taxon>
        <taxon>Mycobacterium</taxon>
        <taxon>Mycobacterium tuberculosis complex</taxon>
    </lineage>
</organism>